<evidence type="ECO:0000255" key="1">
    <source>
        <dbReference type="HAMAP-Rule" id="MF_00377"/>
    </source>
</evidence>
<reference key="1">
    <citation type="journal article" date="1999" name="Nature">
        <title>Genomic sequence comparison of two unrelated isolates of the human gastric pathogen Helicobacter pylori.</title>
        <authorList>
            <person name="Alm R.A."/>
            <person name="Ling L.-S.L."/>
            <person name="Moir D.T."/>
            <person name="King B.L."/>
            <person name="Brown E.D."/>
            <person name="Doig P.C."/>
            <person name="Smith D.R."/>
            <person name="Noonan B."/>
            <person name="Guild B.C."/>
            <person name="deJonge B.L."/>
            <person name="Carmel G."/>
            <person name="Tummino P.J."/>
            <person name="Caruso A."/>
            <person name="Uria-Nickelsen M."/>
            <person name="Mills D.M."/>
            <person name="Ives C."/>
            <person name="Gibson R."/>
            <person name="Merberg D."/>
            <person name="Mills S.D."/>
            <person name="Jiang Q."/>
            <person name="Taylor D.E."/>
            <person name="Vovis G.F."/>
            <person name="Trust T.J."/>
        </authorList>
    </citation>
    <scope>NUCLEOTIDE SEQUENCE [LARGE SCALE GENOMIC DNA]</scope>
    <source>
        <strain>J99 / ATCC 700824</strain>
    </source>
</reference>
<name>DNAA_HELPJ</name>
<proteinExistence type="inferred from homology"/>
<accession>Q9ZJ96</accession>
<feature type="chain" id="PRO_0000114189" description="Chromosomal replication initiator protein DnaA">
    <location>
        <begin position="1"/>
        <end position="457"/>
    </location>
</feature>
<feature type="region of interest" description="Domain I, interacts with DnaA modulators" evidence="1">
    <location>
        <begin position="1"/>
        <end position="77"/>
    </location>
</feature>
<feature type="region of interest" description="Domain II" evidence="1">
    <location>
        <begin position="77"/>
        <end position="108"/>
    </location>
</feature>
<feature type="region of interest" description="Domain III, AAA+ region" evidence="1">
    <location>
        <begin position="109"/>
        <end position="323"/>
    </location>
</feature>
<feature type="region of interest" description="Domain IV, binds dsDNA" evidence="1">
    <location>
        <begin position="324"/>
        <end position="457"/>
    </location>
</feature>
<feature type="binding site" evidence="1">
    <location>
        <position position="153"/>
    </location>
    <ligand>
        <name>ATP</name>
        <dbReference type="ChEBI" id="CHEBI:30616"/>
    </ligand>
</feature>
<feature type="binding site" evidence="1">
    <location>
        <position position="155"/>
    </location>
    <ligand>
        <name>ATP</name>
        <dbReference type="ChEBI" id="CHEBI:30616"/>
    </ligand>
</feature>
<feature type="binding site" evidence="1">
    <location>
        <position position="156"/>
    </location>
    <ligand>
        <name>ATP</name>
        <dbReference type="ChEBI" id="CHEBI:30616"/>
    </ligand>
</feature>
<feature type="binding site" evidence="1">
    <location>
        <position position="157"/>
    </location>
    <ligand>
        <name>ATP</name>
        <dbReference type="ChEBI" id="CHEBI:30616"/>
    </ligand>
</feature>
<protein>
    <recommendedName>
        <fullName evidence="1">Chromosomal replication initiator protein DnaA</fullName>
    </recommendedName>
</protein>
<sequence length="457" mass="51800">MDTNNNIEKEILALVKQNPKVSLIEYENYLSQLKYNPNASKSDIAFFYAPNKFLCTTITAKYGALLKEILSQNKVGMHLAHSVDVRIEVAPKIQVNAQSNINYKATKTSVKDSYTFENFVVGSCNNTVYEIAKKVAQSDTPPYNPVLFYGGTGLGKTHILNAIGNHALEKHKKVVLVTSEDFLTDFLKHLDNKNMDSFKKKYRHCDFFLLDDAQFLQGKPKLEEEFFHTFNELHANSKQIVLISDRSPKNIAGLEDRLKSRFEWGITAKVMPPDLETKLSIVKQKCQLNKITLPEEVMEYIAQHISDNIRQMEGAIIKISVNANLMNATIDLNLAKTVLEDLQKDHAEGSSLENILLAVAQSLNLKSSEIKVSSRQKNVALARKLVVYFARLYTPNPTLSLAQFLDLKDHSSISKMYSSVKKMLEEEKSPFILSLREEIKNRLNELNDKKTAFNSSE</sequence>
<gene>
    <name evidence="1" type="primary">dnaA</name>
    <name type="ordered locus">jhp_1417</name>
</gene>
<dbReference type="EMBL" id="AE001439">
    <property type="protein sequence ID" value="AAD06996.1"/>
    <property type="molecule type" value="Genomic_DNA"/>
</dbReference>
<dbReference type="PIR" id="E71809">
    <property type="entry name" value="E71809"/>
</dbReference>
<dbReference type="RefSeq" id="WP_000380659.1">
    <property type="nucleotide sequence ID" value="NC_000921.1"/>
</dbReference>
<dbReference type="SMR" id="Q9ZJ96"/>
<dbReference type="KEGG" id="hpj:jhp_1417"/>
<dbReference type="PATRIC" id="fig|85963.30.peg.1130"/>
<dbReference type="eggNOG" id="COG0593">
    <property type="taxonomic scope" value="Bacteria"/>
</dbReference>
<dbReference type="Proteomes" id="UP000000804">
    <property type="component" value="Chromosome"/>
</dbReference>
<dbReference type="GO" id="GO:0005737">
    <property type="term" value="C:cytoplasm"/>
    <property type="evidence" value="ECO:0007669"/>
    <property type="project" value="UniProtKB-SubCell"/>
</dbReference>
<dbReference type="GO" id="GO:0005886">
    <property type="term" value="C:plasma membrane"/>
    <property type="evidence" value="ECO:0007669"/>
    <property type="project" value="TreeGrafter"/>
</dbReference>
<dbReference type="GO" id="GO:0005524">
    <property type="term" value="F:ATP binding"/>
    <property type="evidence" value="ECO:0007669"/>
    <property type="project" value="UniProtKB-UniRule"/>
</dbReference>
<dbReference type="GO" id="GO:0016887">
    <property type="term" value="F:ATP hydrolysis activity"/>
    <property type="evidence" value="ECO:0007669"/>
    <property type="project" value="InterPro"/>
</dbReference>
<dbReference type="GO" id="GO:0003688">
    <property type="term" value="F:DNA replication origin binding"/>
    <property type="evidence" value="ECO:0007669"/>
    <property type="project" value="UniProtKB-UniRule"/>
</dbReference>
<dbReference type="GO" id="GO:0008289">
    <property type="term" value="F:lipid binding"/>
    <property type="evidence" value="ECO:0007669"/>
    <property type="project" value="UniProtKB-KW"/>
</dbReference>
<dbReference type="GO" id="GO:0006270">
    <property type="term" value="P:DNA replication initiation"/>
    <property type="evidence" value="ECO:0007669"/>
    <property type="project" value="UniProtKB-UniRule"/>
</dbReference>
<dbReference type="GO" id="GO:0006275">
    <property type="term" value="P:regulation of DNA replication"/>
    <property type="evidence" value="ECO:0007669"/>
    <property type="project" value="UniProtKB-UniRule"/>
</dbReference>
<dbReference type="CDD" id="cd00009">
    <property type="entry name" value="AAA"/>
    <property type="match status" value="1"/>
</dbReference>
<dbReference type="CDD" id="cd06571">
    <property type="entry name" value="Bac_DnaA_C"/>
    <property type="match status" value="1"/>
</dbReference>
<dbReference type="FunFam" id="1.10.1750.10:FF:000007">
    <property type="entry name" value="Chromosomal replication initiator protein DnaA"/>
    <property type="match status" value="1"/>
</dbReference>
<dbReference type="FunFam" id="3.30.300.180:FF:000011">
    <property type="entry name" value="Chromosomal replication initiator protein DnaA"/>
    <property type="match status" value="1"/>
</dbReference>
<dbReference type="FunFam" id="3.40.50.300:FF:002820">
    <property type="entry name" value="Chromosomal replication initiator protein DnaA"/>
    <property type="match status" value="1"/>
</dbReference>
<dbReference type="Gene3D" id="1.10.1750.10">
    <property type="match status" value="1"/>
</dbReference>
<dbReference type="Gene3D" id="1.10.8.60">
    <property type="match status" value="1"/>
</dbReference>
<dbReference type="Gene3D" id="3.30.300.180">
    <property type="match status" value="1"/>
</dbReference>
<dbReference type="Gene3D" id="3.40.50.300">
    <property type="entry name" value="P-loop containing nucleotide triphosphate hydrolases"/>
    <property type="match status" value="1"/>
</dbReference>
<dbReference type="HAMAP" id="MF_00377">
    <property type="entry name" value="DnaA_bact"/>
    <property type="match status" value="1"/>
</dbReference>
<dbReference type="InterPro" id="IPR003593">
    <property type="entry name" value="AAA+_ATPase"/>
</dbReference>
<dbReference type="InterPro" id="IPR001957">
    <property type="entry name" value="Chromosome_initiator_DnaA"/>
</dbReference>
<dbReference type="InterPro" id="IPR020591">
    <property type="entry name" value="Chromosome_initiator_DnaA-like"/>
</dbReference>
<dbReference type="InterPro" id="IPR018312">
    <property type="entry name" value="Chromosome_initiator_DnaA_CS"/>
</dbReference>
<dbReference type="InterPro" id="IPR013159">
    <property type="entry name" value="DnaA_C"/>
</dbReference>
<dbReference type="InterPro" id="IPR013317">
    <property type="entry name" value="DnaA_dom"/>
</dbReference>
<dbReference type="InterPro" id="IPR038454">
    <property type="entry name" value="DnaA_N_sf"/>
</dbReference>
<dbReference type="InterPro" id="IPR027417">
    <property type="entry name" value="P-loop_NTPase"/>
</dbReference>
<dbReference type="InterPro" id="IPR010921">
    <property type="entry name" value="Trp_repressor/repl_initiator"/>
</dbReference>
<dbReference type="NCBIfam" id="TIGR00362">
    <property type="entry name" value="DnaA"/>
    <property type="match status" value="1"/>
</dbReference>
<dbReference type="PANTHER" id="PTHR30050">
    <property type="entry name" value="CHROMOSOMAL REPLICATION INITIATOR PROTEIN DNAA"/>
    <property type="match status" value="1"/>
</dbReference>
<dbReference type="PANTHER" id="PTHR30050:SF2">
    <property type="entry name" value="CHROMOSOMAL REPLICATION INITIATOR PROTEIN DNAA"/>
    <property type="match status" value="1"/>
</dbReference>
<dbReference type="Pfam" id="PF00308">
    <property type="entry name" value="Bac_DnaA"/>
    <property type="match status" value="1"/>
</dbReference>
<dbReference type="Pfam" id="PF08299">
    <property type="entry name" value="Bac_DnaA_C"/>
    <property type="match status" value="1"/>
</dbReference>
<dbReference type="PRINTS" id="PR00051">
    <property type="entry name" value="DNAA"/>
</dbReference>
<dbReference type="SMART" id="SM00382">
    <property type="entry name" value="AAA"/>
    <property type="match status" value="1"/>
</dbReference>
<dbReference type="SMART" id="SM00760">
    <property type="entry name" value="Bac_DnaA_C"/>
    <property type="match status" value="1"/>
</dbReference>
<dbReference type="SUPFAM" id="SSF52540">
    <property type="entry name" value="P-loop containing nucleoside triphosphate hydrolases"/>
    <property type="match status" value="1"/>
</dbReference>
<dbReference type="SUPFAM" id="SSF48295">
    <property type="entry name" value="TrpR-like"/>
    <property type="match status" value="1"/>
</dbReference>
<dbReference type="PROSITE" id="PS01008">
    <property type="entry name" value="DNAA"/>
    <property type="match status" value="1"/>
</dbReference>
<keyword id="KW-0067">ATP-binding</keyword>
<keyword id="KW-0963">Cytoplasm</keyword>
<keyword id="KW-0235">DNA replication</keyword>
<keyword id="KW-0238">DNA-binding</keyword>
<keyword id="KW-0446">Lipid-binding</keyword>
<keyword id="KW-0547">Nucleotide-binding</keyword>
<organism>
    <name type="scientific">Helicobacter pylori (strain J99 / ATCC 700824)</name>
    <name type="common">Campylobacter pylori J99</name>
    <dbReference type="NCBI Taxonomy" id="85963"/>
    <lineage>
        <taxon>Bacteria</taxon>
        <taxon>Pseudomonadati</taxon>
        <taxon>Campylobacterota</taxon>
        <taxon>Epsilonproteobacteria</taxon>
        <taxon>Campylobacterales</taxon>
        <taxon>Helicobacteraceae</taxon>
        <taxon>Helicobacter</taxon>
    </lineage>
</organism>
<comment type="function">
    <text evidence="1">Plays an essential role in the initiation and regulation of chromosomal replication. ATP-DnaA binds to the origin of replication (oriC) to initiate formation of the DNA replication initiation complex once per cell cycle. Binds the DnaA box (a 9 base pair repeat at the origin) and separates the double-stranded (ds)DNA. Forms a right-handed helical filament on oriC DNA; dsDNA binds to the exterior of the filament while single-stranded (ss)DNA is stabiized in the filament's interior. The ATP-DnaA-oriC complex binds and stabilizes one strand of the AT-rich DNA unwinding element (DUE), permitting loading of DNA polymerase. After initiation quickly degrades to an ADP-DnaA complex that is not apt for DNA replication. Binds acidic phospholipids.</text>
</comment>
<comment type="subunit">
    <text evidence="1">Oligomerizes as a right-handed, spiral filament on DNA at oriC.</text>
</comment>
<comment type="subcellular location">
    <subcellularLocation>
        <location evidence="1">Cytoplasm</location>
    </subcellularLocation>
</comment>
<comment type="domain">
    <text evidence="1">Domain I is involved in oligomerization and binding regulators, domain II is flexibile and of varying length in different bacteria, domain III forms the AAA+ region, while domain IV binds dsDNA.</text>
</comment>
<comment type="similarity">
    <text evidence="1">Belongs to the DnaA family.</text>
</comment>